<gene>
    <name evidence="1" type="primary">moaA</name>
    <name type="ordered locus">VV1198</name>
</gene>
<evidence type="ECO:0000255" key="1">
    <source>
        <dbReference type="HAMAP-Rule" id="MF_01225"/>
    </source>
</evidence>
<evidence type="ECO:0000255" key="2">
    <source>
        <dbReference type="PROSITE-ProRule" id="PRU01266"/>
    </source>
</evidence>
<evidence type="ECO:0000305" key="3"/>
<organism>
    <name type="scientific">Vibrio vulnificus (strain YJ016)</name>
    <dbReference type="NCBI Taxonomy" id="196600"/>
    <lineage>
        <taxon>Bacteria</taxon>
        <taxon>Pseudomonadati</taxon>
        <taxon>Pseudomonadota</taxon>
        <taxon>Gammaproteobacteria</taxon>
        <taxon>Vibrionales</taxon>
        <taxon>Vibrionaceae</taxon>
        <taxon>Vibrio</taxon>
    </lineage>
</organism>
<reference key="1">
    <citation type="journal article" date="2003" name="Genome Res.">
        <title>Comparative genome analysis of Vibrio vulnificus, a marine pathogen.</title>
        <authorList>
            <person name="Chen C.-Y."/>
            <person name="Wu K.-M."/>
            <person name="Chang Y.-C."/>
            <person name="Chang C.-H."/>
            <person name="Tsai H.-C."/>
            <person name="Liao T.-L."/>
            <person name="Liu Y.-M."/>
            <person name="Chen H.-J."/>
            <person name="Shen A.B.-T."/>
            <person name="Li J.-C."/>
            <person name="Su T.-L."/>
            <person name="Shao C.-P."/>
            <person name="Lee C.-T."/>
            <person name="Hor L.-I."/>
            <person name="Tsai S.-F."/>
        </authorList>
    </citation>
    <scope>NUCLEOTIDE SEQUENCE [LARGE SCALE GENOMIC DNA]</scope>
    <source>
        <strain>YJ016</strain>
    </source>
</reference>
<comment type="function">
    <text evidence="1">Catalyzes the cyclization of GTP to (8S)-3',8-cyclo-7,8-dihydroguanosine 5'-triphosphate.</text>
</comment>
<comment type="catalytic activity">
    <reaction evidence="1">
        <text>GTP + AH2 + S-adenosyl-L-methionine = (8S)-3',8-cyclo-7,8-dihydroguanosine 5'-triphosphate + 5'-deoxyadenosine + L-methionine + A + H(+)</text>
        <dbReference type="Rhea" id="RHEA:49576"/>
        <dbReference type="ChEBI" id="CHEBI:13193"/>
        <dbReference type="ChEBI" id="CHEBI:15378"/>
        <dbReference type="ChEBI" id="CHEBI:17319"/>
        <dbReference type="ChEBI" id="CHEBI:17499"/>
        <dbReference type="ChEBI" id="CHEBI:37565"/>
        <dbReference type="ChEBI" id="CHEBI:57844"/>
        <dbReference type="ChEBI" id="CHEBI:59789"/>
        <dbReference type="ChEBI" id="CHEBI:131766"/>
        <dbReference type="EC" id="4.1.99.22"/>
    </reaction>
</comment>
<comment type="cofactor">
    <cofactor evidence="1">
        <name>[4Fe-4S] cluster</name>
        <dbReference type="ChEBI" id="CHEBI:49883"/>
    </cofactor>
    <text evidence="1">Binds 2 [4Fe-4S] clusters. Binds 1 [4Fe-4S] cluster coordinated with 3 cysteines and an exchangeable S-adenosyl-L-methionine and 1 [4Fe-4S] cluster coordinated with 3 cysteines and the GTP-derived substrate.</text>
</comment>
<comment type="pathway">
    <text evidence="1">Cofactor biosynthesis; molybdopterin biosynthesis.</text>
</comment>
<comment type="subunit">
    <text evidence="1">Monomer and homodimer.</text>
</comment>
<comment type="similarity">
    <text evidence="1">Belongs to the radical SAM superfamily. MoaA family.</text>
</comment>
<comment type="sequence caution" evidence="3">
    <conflict type="erroneous initiation">
        <sequence resource="EMBL-CDS" id="BAC93962"/>
    </conflict>
</comment>
<keyword id="KW-0004">4Fe-4S</keyword>
<keyword id="KW-0342">GTP-binding</keyword>
<keyword id="KW-0408">Iron</keyword>
<keyword id="KW-0411">Iron-sulfur</keyword>
<keyword id="KW-0456">Lyase</keyword>
<keyword id="KW-0479">Metal-binding</keyword>
<keyword id="KW-0501">Molybdenum cofactor biosynthesis</keyword>
<keyword id="KW-0547">Nucleotide-binding</keyword>
<keyword id="KW-0949">S-adenosyl-L-methionine</keyword>
<feature type="chain" id="PRO_0000153009" description="GTP 3',8-cyclase">
    <location>
        <begin position="1"/>
        <end position="334"/>
    </location>
</feature>
<feature type="domain" description="Radical SAM core" evidence="2">
    <location>
        <begin position="13"/>
        <end position="239"/>
    </location>
</feature>
<feature type="binding site" evidence="1">
    <location>
        <position position="22"/>
    </location>
    <ligand>
        <name>GTP</name>
        <dbReference type="ChEBI" id="CHEBI:37565"/>
    </ligand>
</feature>
<feature type="binding site" evidence="1">
    <location>
        <position position="29"/>
    </location>
    <ligand>
        <name>[4Fe-4S] cluster</name>
        <dbReference type="ChEBI" id="CHEBI:49883"/>
        <label>1</label>
        <note>4Fe-4S-S-AdoMet</note>
    </ligand>
</feature>
<feature type="binding site" evidence="1">
    <location>
        <position position="33"/>
    </location>
    <ligand>
        <name>[4Fe-4S] cluster</name>
        <dbReference type="ChEBI" id="CHEBI:49883"/>
        <label>1</label>
        <note>4Fe-4S-S-AdoMet</note>
    </ligand>
</feature>
<feature type="binding site" evidence="1">
    <location>
        <position position="35"/>
    </location>
    <ligand>
        <name>S-adenosyl-L-methionine</name>
        <dbReference type="ChEBI" id="CHEBI:59789"/>
    </ligand>
</feature>
<feature type="binding site" evidence="1">
    <location>
        <position position="36"/>
    </location>
    <ligand>
        <name>[4Fe-4S] cluster</name>
        <dbReference type="ChEBI" id="CHEBI:49883"/>
        <label>1</label>
        <note>4Fe-4S-S-AdoMet</note>
    </ligand>
</feature>
<feature type="binding site" evidence="1">
    <location>
        <position position="73"/>
    </location>
    <ligand>
        <name>GTP</name>
        <dbReference type="ChEBI" id="CHEBI:37565"/>
    </ligand>
</feature>
<feature type="binding site" evidence="1">
    <location>
        <position position="77"/>
    </location>
    <ligand>
        <name>S-adenosyl-L-methionine</name>
        <dbReference type="ChEBI" id="CHEBI:59789"/>
    </ligand>
</feature>
<feature type="binding site" evidence="1">
    <location>
        <position position="104"/>
    </location>
    <ligand>
        <name>GTP</name>
        <dbReference type="ChEBI" id="CHEBI:37565"/>
    </ligand>
</feature>
<feature type="binding site" evidence="1">
    <location>
        <position position="128"/>
    </location>
    <ligand>
        <name>S-adenosyl-L-methionine</name>
        <dbReference type="ChEBI" id="CHEBI:59789"/>
    </ligand>
</feature>
<feature type="binding site" evidence="1">
    <location>
        <position position="165"/>
    </location>
    <ligand>
        <name>GTP</name>
        <dbReference type="ChEBI" id="CHEBI:37565"/>
    </ligand>
</feature>
<feature type="binding site" evidence="1">
    <location>
        <position position="199"/>
    </location>
    <ligand>
        <name>S-adenosyl-L-methionine</name>
        <dbReference type="ChEBI" id="CHEBI:59789"/>
    </ligand>
</feature>
<feature type="binding site" evidence="1">
    <location>
        <position position="262"/>
    </location>
    <ligand>
        <name>[4Fe-4S] cluster</name>
        <dbReference type="ChEBI" id="CHEBI:49883"/>
        <label>2</label>
        <note>4Fe-4S-substrate</note>
    </ligand>
</feature>
<feature type="binding site" evidence="1">
    <location>
        <position position="265"/>
    </location>
    <ligand>
        <name>[4Fe-4S] cluster</name>
        <dbReference type="ChEBI" id="CHEBI:49883"/>
        <label>2</label>
        <note>4Fe-4S-substrate</note>
    </ligand>
</feature>
<feature type="binding site" evidence="1">
    <location>
        <begin position="267"/>
        <end position="269"/>
    </location>
    <ligand>
        <name>GTP</name>
        <dbReference type="ChEBI" id="CHEBI:37565"/>
    </ligand>
</feature>
<feature type="binding site" evidence="1">
    <location>
        <position position="279"/>
    </location>
    <ligand>
        <name>[4Fe-4S] cluster</name>
        <dbReference type="ChEBI" id="CHEBI:49883"/>
        <label>2</label>
        <note>4Fe-4S-substrate</note>
    </ligand>
</feature>
<accession>Q7MM75</accession>
<proteinExistence type="inferred from homology"/>
<dbReference type="EC" id="4.1.99.22" evidence="1"/>
<dbReference type="EMBL" id="BA000037">
    <property type="protein sequence ID" value="BAC93962.1"/>
    <property type="status" value="ALT_INIT"/>
    <property type="molecule type" value="Genomic_DNA"/>
</dbReference>
<dbReference type="RefSeq" id="WP_011149914.1">
    <property type="nucleotide sequence ID" value="NC_005139.1"/>
</dbReference>
<dbReference type="SMR" id="Q7MM75"/>
<dbReference type="STRING" id="672.VV93_v1c11170"/>
<dbReference type="KEGG" id="vvy:VV1198"/>
<dbReference type="PATRIC" id="fig|196600.6.peg.1190"/>
<dbReference type="eggNOG" id="COG2896">
    <property type="taxonomic scope" value="Bacteria"/>
</dbReference>
<dbReference type="HOGENOM" id="CLU_009273_0_1_6"/>
<dbReference type="UniPathway" id="UPA00344"/>
<dbReference type="Proteomes" id="UP000002675">
    <property type="component" value="Chromosome I"/>
</dbReference>
<dbReference type="GO" id="GO:0051539">
    <property type="term" value="F:4 iron, 4 sulfur cluster binding"/>
    <property type="evidence" value="ECO:0007669"/>
    <property type="project" value="UniProtKB-UniRule"/>
</dbReference>
<dbReference type="GO" id="GO:0061799">
    <property type="term" value="F:cyclic pyranopterin monophosphate synthase activity"/>
    <property type="evidence" value="ECO:0007669"/>
    <property type="project" value="TreeGrafter"/>
</dbReference>
<dbReference type="GO" id="GO:0061798">
    <property type="term" value="F:GTP 3',8'-cyclase activity"/>
    <property type="evidence" value="ECO:0007669"/>
    <property type="project" value="UniProtKB-UniRule"/>
</dbReference>
<dbReference type="GO" id="GO:0005525">
    <property type="term" value="F:GTP binding"/>
    <property type="evidence" value="ECO:0007669"/>
    <property type="project" value="UniProtKB-UniRule"/>
</dbReference>
<dbReference type="GO" id="GO:0046872">
    <property type="term" value="F:metal ion binding"/>
    <property type="evidence" value="ECO:0007669"/>
    <property type="project" value="UniProtKB-KW"/>
</dbReference>
<dbReference type="GO" id="GO:1904047">
    <property type="term" value="F:S-adenosyl-L-methionine binding"/>
    <property type="evidence" value="ECO:0007669"/>
    <property type="project" value="UniProtKB-UniRule"/>
</dbReference>
<dbReference type="GO" id="GO:0006777">
    <property type="term" value="P:Mo-molybdopterin cofactor biosynthetic process"/>
    <property type="evidence" value="ECO:0007669"/>
    <property type="project" value="UniProtKB-UniRule"/>
</dbReference>
<dbReference type="CDD" id="cd01335">
    <property type="entry name" value="Radical_SAM"/>
    <property type="match status" value="1"/>
</dbReference>
<dbReference type="CDD" id="cd21117">
    <property type="entry name" value="Twitch_MoaA"/>
    <property type="match status" value="1"/>
</dbReference>
<dbReference type="FunFam" id="3.20.20.70:FF:000057">
    <property type="entry name" value="GTP 3',8-cyclase"/>
    <property type="match status" value="1"/>
</dbReference>
<dbReference type="Gene3D" id="3.20.20.70">
    <property type="entry name" value="Aldolase class I"/>
    <property type="match status" value="1"/>
</dbReference>
<dbReference type="HAMAP" id="MF_01225_B">
    <property type="entry name" value="MoaA_B"/>
    <property type="match status" value="1"/>
</dbReference>
<dbReference type="InterPro" id="IPR013785">
    <property type="entry name" value="Aldolase_TIM"/>
</dbReference>
<dbReference type="InterPro" id="IPR006638">
    <property type="entry name" value="Elp3/MiaA/NifB-like_rSAM"/>
</dbReference>
<dbReference type="InterPro" id="IPR013483">
    <property type="entry name" value="MoaA"/>
</dbReference>
<dbReference type="InterPro" id="IPR010505">
    <property type="entry name" value="MoaA_twitch"/>
</dbReference>
<dbReference type="InterPro" id="IPR050105">
    <property type="entry name" value="MoCo_biosynth_MoaA/MoaC"/>
</dbReference>
<dbReference type="InterPro" id="IPR007197">
    <property type="entry name" value="rSAM"/>
</dbReference>
<dbReference type="NCBIfam" id="TIGR02666">
    <property type="entry name" value="moaA"/>
    <property type="match status" value="1"/>
</dbReference>
<dbReference type="PANTHER" id="PTHR22960:SF28">
    <property type="entry name" value="GTP 3',8-CYCLASE"/>
    <property type="match status" value="1"/>
</dbReference>
<dbReference type="PANTHER" id="PTHR22960">
    <property type="entry name" value="MOLYBDOPTERIN COFACTOR SYNTHESIS PROTEIN A"/>
    <property type="match status" value="1"/>
</dbReference>
<dbReference type="Pfam" id="PF13353">
    <property type="entry name" value="Fer4_12"/>
    <property type="match status" value="1"/>
</dbReference>
<dbReference type="Pfam" id="PF06463">
    <property type="entry name" value="Mob_synth_C"/>
    <property type="match status" value="1"/>
</dbReference>
<dbReference type="Pfam" id="PF04055">
    <property type="entry name" value="Radical_SAM"/>
    <property type="match status" value="1"/>
</dbReference>
<dbReference type="SFLD" id="SFLDG01383">
    <property type="entry name" value="cyclic_pyranopterin_phosphate"/>
    <property type="match status" value="1"/>
</dbReference>
<dbReference type="SFLD" id="SFLDS00029">
    <property type="entry name" value="Radical_SAM"/>
    <property type="match status" value="1"/>
</dbReference>
<dbReference type="SMART" id="SM00729">
    <property type="entry name" value="Elp3"/>
    <property type="match status" value="1"/>
</dbReference>
<dbReference type="SUPFAM" id="SSF102114">
    <property type="entry name" value="Radical SAM enzymes"/>
    <property type="match status" value="1"/>
</dbReference>
<dbReference type="PROSITE" id="PS51918">
    <property type="entry name" value="RADICAL_SAM"/>
    <property type="match status" value="1"/>
</dbReference>
<name>MOAA_VIBVY</name>
<sequence>MERCSVAQQFEDRFHRKFYYLRLSVTDVCNFKCTYCLPDGYQPSGQKNSSFLNLSEIRRVVKAFADCGTSKVRITGGEPSLRKDFTDIIHTVASTQGIKRVATTTNGYRMEKHIGEWKEAGLNQINVSVDSLDPRMFHQITGENKFHQVMSGIDRAFEVGFEQVKVNVVLMKDLNHNELPAFLHWIKHRPIQLRFIELMQTGEMDTLFQQHHVSGVAIRNHLIANGWLLKVKAANDGPAQVFVHPDYQGEIGLIMPYEKDFCASCNRLRVSAKGKLHLCLFGDRGVELRDLMQQDDQEPDLIARIQSELQTKSVSHFLNEGQTGMTPHLASIGG</sequence>
<protein>
    <recommendedName>
        <fullName evidence="1">GTP 3',8-cyclase</fullName>
        <ecNumber evidence="1">4.1.99.22</ecNumber>
    </recommendedName>
    <alternativeName>
        <fullName evidence="1">Molybdenum cofactor biosynthesis protein A</fullName>
    </alternativeName>
</protein>